<protein>
    <recommendedName>
        <fullName evidence="1">Peptidyl-tRNA hydrolase</fullName>
        <shortName evidence="1">Pth</shortName>
        <ecNumber evidence="1">3.1.1.29</ecNumber>
    </recommendedName>
</protein>
<proteinExistence type="inferred from homology"/>
<reference key="1">
    <citation type="journal article" date="2006" name="PLoS Genet.">
        <title>The complete genome sequence and comparative genome analysis of the high pathogenicity Yersinia enterocolitica strain 8081.</title>
        <authorList>
            <person name="Thomson N.R."/>
            <person name="Howard S."/>
            <person name="Wren B.W."/>
            <person name="Holden M.T.G."/>
            <person name="Crossman L."/>
            <person name="Challis G.L."/>
            <person name="Churcher C."/>
            <person name="Mungall K."/>
            <person name="Brooks K."/>
            <person name="Chillingworth T."/>
            <person name="Feltwell T."/>
            <person name="Abdellah Z."/>
            <person name="Hauser H."/>
            <person name="Jagels K."/>
            <person name="Maddison M."/>
            <person name="Moule S."/>
            <person name="Sanders M."/>
            <person name="Whitehead S."/>
            <person name="Quail M.A."/>
            <person name="Dougan G."/>
            <person name="Parkhill J."/>
            <person name="Prentice M.B."/>
        </authorList>
    </citation>
    <scope>NUCLEOTIDE SEQUENCE [LARGE SCALE GENOMIC DNA]</scope>
    <source>
        <strain>NCTC 13174 / 8081</strain>
    </source>
</reference>
<accession>A1JRW1</accession>
<name>PTH_YERE8</name>
<keyword id="KW-0963">Cytoplasm</keyword>
<keyword id="KW-0378">Hydrolase</keyword>
<keyword id="KW-0694">RNA-binding</keyword>
<keyword id="KW-0820">tRNA-binding</keyword>
<evidence type="ECO:0000255" key="1">
    <source>
        <dbReference type="HAMAP-Rule" id="MF_00083"/>
    </source>
</evidence>
<organism>
    <name type="scientific">Yersinia enterocolitica serotype O:8 / biotype 1B (strain NCTC 13174 / 8081)</name>
    <dbReference type="NCBI Taxonomy" id="393305"/>
    <lineage>
        <taxon>Bacteria</taxon>
        <taxon>Pseudomonadati</taxon>
        <taxon>Pseudomonadota</taxon>
        <taxon>Gammaproteobacteria</taxon>
        <taxon>Enterobacterales</taxon>
        <taxon>Yersiniaceae</taxon>
        <taxon>Yersinia</taxon>
    </lineage>
</organism>
<feature type="chain" id="PRO_1000010665" description="Peptidyl-tRNA hydrolase">
    <location>
        <begin position="1"/>
        <end position="197"/>
    </location>
</feature>
<feature type="active site" description="Proton acceptor" evidence="1">
    <location>
        <position position="22"/>
    </location>
</feature>
<feature type="binding site" evidence="1">
    <location>
        <position position="17"/>
    </location>
    <ligand>
        <name>tRNA</name>
        <dbReference type="ChEBI" id="CHEBI:17843"/>
    </ligand>
</feature>
<feature type="binding site" evidence="1">
    <location>
        <position position="68"/>
    </location>
    <ligand>
        <name>tRNA</name>
        <dbReference type="ChEBI" id="CHEBI:17843"/>
    </ligand>
</feature>
<feature type="binding site" evidence="1">
    <location>
        <position position="70"/>
    </location>
    <ligand>
        <name>tRNA</name>
        <dbReference type="ChEBI" id="CHEBI:17843"/>
    </ligand>
</feature>
<feature type="binding site" evidence="1">
    <location>
        <position position="116"/>
    </location>
    <ligand>
        <name>tRNA</name>
        <dbReference type="ChEBI" id="CHEBI:17843"/>
    </ligand>
</feature>
<feature type="site" description="Discriminates between blocked and unblocked aminoacyl-tRNA" evidence="1">
    <location>
        <position position="12"/>
    </location>
</feature>
<feature type="site" description="Stabilizes the basic form of H active site to accept a proton" evidence="1">
    <location>
        <position position="95"/>
    </location>
</feature>
<sequence>MSSIKLIVGLANPGAEYAQTRHNAGAWYVDLLALRHNQQLKEESKFFGYTARLNLAGQDVRLLVPSTFMNLSGKAVAAMAGFYRILPEEILVAHDELDIPPGVAKLKLGGGNGGHNGLKDIQSKLGNNPNFYRLRIGIGHPGDKSKVTGFVLGNPPASEQTLIDDAIDESIRCTEVLLKEDITKAMNRLHSFKAGAQ</sequence>
<gene>
    <name evidence="1" type="primary">pth</name>
    <name type="ordered locus">YE2437</name>
</gene>
<comment type="function">
    <text evidence="1">Hydrolyzes ribosome-free peptidyl-tRNAs (with 1 or more amino acids incorporated), which drop off the ribosome during protein synthesis, or as a result of ribosome stalling.</text>
</comment>
<comment type="function">
    <text evidence="1">Catalyzes the release of premature peptidyl moieties from peptidyl-tRNA molecules trapped in stalled 50S ribosomal subunits, and thus maintains levels of free tRNAs and 50S ribosomes.</text>
</comment>
<comment type="catalytic activity">
    <reaction evidence="1">
        <text>an N-acyl-L-alpha-aminoacyl-tRNA + H2O = an N-acyl-L-amino acid + a tRNA + H(+)</text>
        <dbReference type="Rhea" id="RHEA:54448"/>
        <dbReference type="Rhea" id="RHEA-COMP:10123"/>
        <dbReference type="Rhea" id="RHEA-COMP:13883"/>
        <dbReference type="ChEBI" id="CHEBI:15377"/>
        <dbReference type="ChEBI" id="CHEBI:15378"/>
        <dbReference type="ChEBI" id="CHEBI:59874"/>
        <dbReference type="ChEBI" id="CHEBI:78442"/>
        <dbReference type="ChEBI" id="CHEBI:138191"/>
        <dbReference type="EC" id="3.1.1.29"/>
    </reaction>
</comment>
<comment type="subunit">
    <text evidence="1">Monomer.</text>
</comment>
<comment type="subcellular location">
    <subcellularLocation>
        <location evidence="1">Cytoplasm</location>
    </subcellularLocation>
</comment>
<comment type="similarity">
    <text evidence="1">Belongs to the PTH family.</text>
</comment>
<dbReference type="EC" id="3.1.1.29" evidence="1"/>
<dbReference type="EMBL" id="AM286415">
    <property type="protein sequence ID" value="CAL12484.1"/>
    <property type="molecule type" value="Genomic_DNA"/>
</dbReference>
<dbReference type="RefSeq" id="WP_011816544.1">
    <property type="nucleotide sequence ID" value="NC_008800.1"/>
</dbReference>
<dbReference type="RefSeq" id="YP_001006650.1">
    <property type="nucleotide sequence ID" value="NC_008800.1"/>
</dbReference>
<dbReference type="SMR" id="A1JRW1"/>
<dbReference type="KEGG" id="yen:YE2437"/>
<dbReference type="PATRIC" id="fig|393305.7.peg.2589"/>
<dbReference type="eggNOG" id="COG0193">
    <property type="taxonomic scope" value="Bacteria"/>
</dbReference>
<dbReference type="HOGENOM" id="CLU_062456_3_1_6"/>
<dbReference type="OrthoDB" id="9800507at2"/>
<dbReference type="Proteomes" id="UP000000642">
    <property type="component" value="Chromosome"/>
</dbReference>
<dbReference type="GO" id="GO:0005737">
    <property type="term" value="C:cytoplasm"/>
    <property type="evidence" value="ECO:0007669"/>
    <property type="project" value="UniProtKB-SubCell"/>
</dbReference>
<dbReference type="GO" id="GO:0004045">
    <property type="term" value="F:peptidyl-tRNA hydrolase activity"/>
    <property type="evidence" value="ECO:0007669"/>
    <property type="project" value="UniProtKB-UniRule"/>
</dbReference>
<dbReference type="GO" id="GO:0000049">
    <property type="term" value="F:tRNA binding"/>
    <property type="evidence" value="ECO:0007669"/>
    <property type="project" value="UniProtKB-UniRule"/>
</dbReference>
<dbReference type="GO" id="GO:0006515">
    <property type="term" value="P:protein quality control for misfolded or incompletely synthesized proteins"/>
    <property type="evidence" value="ECO:0007669"/>
    <property type="project" value="UniProtKB-UniRule"/>
</dbReference>
<dbReference type="GO" id="GO:0072344">
    <property type="term" value="P:rescue of stalled ribosome"/>
    <property type="evidence" value="ECO:0007669"/>
    <property type="project" value="UniProtKB-UniRule"/>
</dbReference>
<dbReference type="CDD" id="cd00462">
    <property type="entry name" value="PTH"/>
    <property type="match status" value="1"/>
</dbReference>
<dbReference type="FunFam" id="3.40.50.1470:FF:000001">
    <property type="entry name" value="Peptidyl-tRNA hydrolase"/>
    <property type="match status" value="1"/>
</dbReference>
<dbReference type="Gene3D" id="3.40.50.1470">
    <property type="entry name" value="Peptidyl-tRNA hydrolase"/>
    <property type="match status" value="1"/>
</dbReference>
<dbReference type="HAMAP" id="MF_00083">
    <property type="entry name" value="Pept_tRNA_hydro_bact"/>
    <property type="match status" value="1"/>
</dbReference>
<dbReference type="InterPro" id="IPR001328">
    <property type="entry name" value="Pept_tRNA_hydro"/>
</dbReference>
<dbReference type="InterPro" id="IPR018171">
    <property type="entry name" value="Pept_tRNA_hydro_CS"/>
</dbReference>
<dbReference type="InterPro" id="IPR036416">
    <property type="entry name" value="Pept_tRNA_hydro_sf"/>
</dbReference>
<dbReference type="NCBIfam" id="TIGR00447">
    <property type="entry name" value="pth"/>
    <property type="match status" value="1"/>
</dbReference>
<dbReference type="PANTHER" id="PTHR17224">
    <property type="entry name" value="PEPTIDYL-TRNA HYDROLASE"/>
    <property type="match status" value="1"/>
</dbReference>
<dbReference type="PANTHER" id="PTHR17224:SF1">
    <property type="entry name" value="PEPTIDYL-TRNA HYDROLASE"/>
    <property type="match status" value="1"/>
</dbReference>
<dbReference type="Pfam" id="PF01195">
    <property type="entry name" value="Pept_tRNA_hydro"/>
    <property type="match status" value="1"/>
</dbReference>
<dbReference type="SUPFAM" id="SSF53178">
    <property type="entry name" value="Peptidyl-tRNA hydrolase-like"/>
    <property type="match status" value="1"/>
</dbReference>
<dbReference type="PROSITE" id="PS01195">
    <property type="entry name" value="PEPT_TRNA_HYDROL_1"/>
    <property type="match status" value="1"/>
</dbReference>
<dbReference type="PROSITE" id="PS01196">
    <property type="entry name" value="PEPT_TRNA_HYDROL_2"/>
    <property type="match status" value="1"/>
</dbReference>